<keyword id="KW-0349">Heme</keyword>
<keyword id="KW-0408">Iron</keyword>
<keyword id="KW-0479">Metal-binding</keyword>
<keyword id="KW-0503">Monooxygenase</keyword>
<keyword id="KW-0560">Oxidoreductase</keyword>
<keyword id="KW-0614">Plasmid</keyword>
<keyword id="KW-1185">Reference proteome</keyword>
<feature type="chain" id="PRO_0000052308" description="Cytochrome P450 BJ-1 homolog">
    <location>
        <begin position="1"/>
        <end position="400"/>
    </location>
</feature>
<feature type="binding site" description="axial binding residue" evidence="1">
    <location>
        <position position="349"/>
    </location>
    <ligand>
        <name>heme</name>
        <dbReference type="ChEBI" id="CHEBI:30413"/>
    </ligand>
    <ligandPart>
        <name>Fe</name>
        <dbReference type="ChEBI" id="CHEBI:18248"/>
    </ligandPart>
</feature>
<gene>
    <name type="primary">cyp112A2</name>
    <name type="ordered locus">NGR_a02700</name>
    <name type="ORF">y4lD</name>
</gene>
<comment type="function">
    <text>Cytochromes P450 are a group of heme-thiolate monooxygenases. They oxidize a variety of structurally unrelated compounds, including steroids, fatty acids, and xenobiotics.</text>
</comment>
<comment type="cofactor">
    <cofactor evidence="1">
        <name>heme</name>
        <dbReference type="ChEBI" id="CHEBI:30413"/>
    </cofactor>
</comment>
<comment type="similarity">
    <text evidence="2">Belongs to the cytochrome P450 family.</text>
</comment>
<sequence length="400" mass="44248">MPEQPLPTLPMWRVDHIEPSPTMLALRANGPIHNVRFPRGHEGWWVTGYDEAKAVLSDAAFRPAGMPPAAFTPDCVILGSPGWLVSHEGGEHARLRTIVAPAFSDRRVKLLAQQVEAIAAQLFETLAAQPQPADLRRHLSFPLPAMVISALMGVLYEDHAFFAGLSDEVMTHQHESGPRSASRLAWEELRAYIRGKMRDKRQDPGDNLLTDLLAAVDRGEATEEEAIGLAAGMLVAGHESTVAQIEFGLLAMLRHPQQRERLVGNPSLVDKAVEEILRMYPPGAGWDGIMRYPRTDVTIAGVHIPAESKVLVGLPATSFDPRHFEDPEIFDIGRDAKPHLAFSYGPHYCIGMALARLELKVVFGSIFQRFPALRLAVAPEELKLRKEIITGGFEEFPVLW</sequence>
<name>CPXP_SINFN</name>
<geneLocation type="plasmid">
    <name>sym pNGR234a</name>
</geneLocation>
<proteinExistence type="inferred from homology"/>
<organism>
    <name type="scientific">Sinorhizobium fredii (strain NBRC 101917 / NGR234)</name>
    <dbReference type="NCBI Taxonomy" id="394"/>
    <lineage>
        <taxon>Bacteria</taxon>
        <taxon>Pseudomonadati</taxon>
        <taxon>Pseudomonadota</taxon>
        <taxon>Alphaproteobacteria</taxon>
        <taxon>Hyphomicrobiales</taxon>
        <taxon>Rhizobiaceae</taxon>
        <taxon>Sinorhizobium/Ensifer group</taxon>
        <taxon>Sinorhizobium</taxon>
    </lineage>
</organism>
<protein>
    <recommendedName>
        <fullName>Cytochrome P450 BJ-1 homolog</fullName>
        <ecNumber>1.14.14.-</ecNumber>
    </recommendedName>
</protein>
<accession>P55544</accession>
<reference key="1">
    <citation type="journal article" date="1997" name="Nature">
        <title>Molecular basis of symbiosis between Rhizobium and legumes.</title>
        <authorList>
            <person name="Freiberg C.A."/>
            <person name="Fellay R."/>
            <person name="Bairoch A."/>
            <person name="Broughton W.J."/>
            <person name="Rosenthal A."/>
            <person name="Perret X."/>
        </authorList>
    </citation>
    <scope>NUCLEOTIDE SEQUENCE [LARGE SCALE GENOMIC DNA]</scope>
    <source>
        <strain>NBRC 101917 / NGR234</strain>
    </source>
</reference>
<reference key="2">
    <citation type="journal article" date="2009" name="Appl. Environ. Microbiol.">
        <title>Rhizobium sp. strain NGR234 possesses a remarkable number of secretion systems.</title>
        <authorList>
            <person name="Schmeisser C."/>
            <person name="Liesegang H."/>
            <person name="Krysciak D."/>
            <person name="Bakkou N."/>
            <person name="Le Quere A."/>
            <person name="Wollherr A."/>
            <person name="Heinemeyer I."/>
            <person name="Morgenstern B."/>
            <person name="Pommerening-Roeser A."/>
            <person name="Flores M."/>
            <person name="Palacios R."/>
            <person name="Brenner S."/>
            <person name="Gottschalk G."/>
            <person name="Schmitz R.A."/>
            <person name="Broughton W.J."/>
            <person name="Perret X."/>
            <person name="Strittmatter A.W."/>
            <person name="Streit W.R."/>
        </authorList>
    </citation>
    <scope>NUCLEOTIDE SEQUENCE [LARGE SCALE GENOMIC DNA]</scope>
    <source>
        <strain>NBRC 101917 / NGR234</strain>
    </source>
</reference>
<dbReference type="EC" id="1.14.14.-"/>
<dbReference type="EMBL" id="U00090">
    <property type="protein sequence ID" value="AAB91757.1"/>
    <property type="molecule type" value="Genomic_DNA"/>
</dbReference>
<dbReference type="RefSeq" id="NP_443955.1">
    <property type="nucleotide sequence ID" value="NC_000914.2"/>
</dbReference>
<dbReference type="RefSeq" id="WP_010875295.1">
    <property type="nucleotide sequence ID" value="NC_000914.2"/>
</dbReference>
<dbReference type="SMR" id="P55544"/>
<dbReference type="KEGG" id="rhi:NGR_a02700"/>
<dbReference type="PATRIC" id="fig|394.7.peg.288"/>
<dbReference type="eggNOG" id="COG2124">
    <property type="taxonomic scope" value="Bacteria"/>
</dbReference>
<dbReference type="HOGENOM" id="CLU_033716_1_1_5"/>
<dbReference type="OrthoDB" id="9801155at2"/>
<dbReference type="Proteomes" id="UP000001054">
    <property type="component" value="Plasmid pNGR234a"/>
</dbReference>
<dbReference type="GO" id="GO:0020037">
    <property type="term" value="F:heme binding"/>
    <property type="evidence" value="ECO:0007669"/>
    <property type="project" value="InterPro"/>
</dbReference>
<dbReference type="GO" id="GO:0005506">
    <property type="term" value="F:iron ion binding"/>
    <property type="evidence" value="ECO:0007669"/>
    <property type="project" value="InterPro"/>
</dbReference>
<dbReference type="GO" id="GO:0004497">
    <property type="term" value="F:monooxygenase activity"/>
    <property type="evidence" value="ECO:0007669"/>
    <property type="project" value="UniProtKB-KW"/>
</dbReference>
<dbReference type="GO" id="GO:0016705">
    <property type="term" value="F:oxidoreductase activity, acting on paired donors, with incorporation or reduction of molecular oxygen"/>
    <property type="evidence" value="ECO:0007669"/>
    <property type="project" value="InterPro"/>
</dbReference>
<dbReference type="CDD" id="cd11031">
    <property type="entry name" value="Cyp158A-like"/>
    <property type="match status" value="1"/>
</dbReference>
<dbReference type="FunFam" id="1.10.630.10:FF:000018">
    <property type="entry name" value="Cytochrome P450 monooxygenase"/>
    <property type="match status" value="1"/>
</dbReference>
<dbReference type="Gene3D" id="1.10.630.10">
    <property type="entry name" value="Cytochrome P450"/>
    <property type="match status" value="1"/>
</dbReference>
<dbReference type="InterPro" id="IPR001128">
    <property type="entry name" value="Cyt_P450"/>
</dbReference>
<dbReference type="InterPro" id="IPR002397">
    <property type="entry name" value="Cyt_P450_B"/>
</dbReference>
<dbReference type="InterPro" id="IPR017972">
    <property type="entry name" value="Cyt_P450_CS"/>
</dbReference>
<dbReference type="InterPro" id="IPR036396">
    <property type="entry name" value="Cyt_P450_sf"/>
</dbReference>
<dbReference type="PANTHER" id="PTHR46696:SF5">
    <property type="entry name" value="CYTOCHROME P450 BJ-1"/>
    <property type="match status" value="1"/>
</dbReference>
<dbReference type="PANTHER" id="PTHR46696">
    <property type="entry name" value="P450, PUTATIVE (EUROFUNG)-RELATED"/>
    <property type="match status" value="1"/>
</dbReference>
<dbReference type="Pfam" id="PF00067">
    <property type="entry name" value="p450"/>
    <property type="match status" value="1"/>
</dbReference>
<dbReference type="PRINTS" id="PR00359">
    <property type="entry name" value="BP450"/>
</dbReference>
<dbReference type="PRINTS" id="PR00385">
    <property type="entry name" value="P450"/>
</dbReference>
<dbReference type="SUPFAM" id="SSF48264">
    <property type="entry name" value="Cytochrome P450"/>
    <property type="match status" value="1"/>
</dbReference>
<dbReference type="PROSITE" id="PS00086">
    <property type="entry name" value="CYTOCHROME_P450"/>
    <property type="match status" value="1"/>
</dbReference>
<evidence type="ECO:0000250" key="1"/>
<evidence type="ECO:0000305" key="2"/>